<protein>
    <recommendedName>
        <fullName evidence="1">Photosystem II CP47 reaction center protein</fullName>
    </recommendedName>
    <alternativeName>
        <fullName evidence="1">PSII 47 kDa protein</fullName>
    </alternativeName>
    <alternativeName>
        <fullName evidence="1">Protein CP-47</fullName>
    </alternativeName>
</protein>
<organism>
    <name type="scientific">Angiopteris evecta</name>
    <name type="common">Mule's foot fern</name>
    <name type="synonym">Polypodium evectum</name>
    <dbReference type="NCBI Taxonomy" id="13825"/>
    <lineage>
        <taxon>Eukaryota</taxon>
        <taxon>Viridiplantae</taxon>
        <taxon>Streptophyta</taxon>
        <taxon>Embryophyta</taxon>
        <taxon>Tracheophyta</taxon>
        <taxon>Polypodiopsida</taxon>
        <taxon>Marattiidae</taxon>
        <taxon>Marattiales</taxon>
        <taxon>Marattiaceae</taxon>
        <taxon>Angiopteris</taxon>
    </lineage>
</organism>
<feature type="chain" id="PRO_0000359795" description="Photosystem II CP47 reaction center protein">
    <location>
        <begin position="1"/>
        <end position="508"/>
    </location>
</feature>
<feature type="transmembrane region" description="Helical" evidence="1">
    <location>
        <begin position="21"/>
        <end position="36"/>
    </location>
</feature>
<feature type="transmembrane region" description="Helical" evidence="1">
    <location>
        <begin position="101"/>
        <end position="115"/>
    </location>
</feature>
<feature type="transmembrane region" description="Helical" evidence="1">
    <location>
        <begin position="140"/>
        <end position="156"/>
    </location>
</feature>
<feature type="transmembrane region" description="Helical" evidence="1">
    <location>
        <begin position="203"/>
        <end position="218"/>
    </location>
</feature>
<feature type="transmembrane region" description="Helical" evidence="1">
    <location>
        <begin position="237"/>
        <end position="252"/>
    </location>
</feature>
<feature type="transmembrane region" description="Helical" evidence="1">
    <location>
        <begin position="457"/>
        <end position="472"/>
    </location>
</feature>
<gene>
    <name evidence="1" type="primary">psbB</name>
</gene>
<accession>A2T359</accession>
<reference key="1">
    <citation type="journal article" date="2007" name="Am. Fern J.">
        <title>The complete plastid genome sequence of Angiopteris evecta (G. Forst.) Hoffm. (Marattiaceae).</title>
        <authorList>
            <person name="Roper J.M."/>
            <person name="Hansen S.K."/>
            <person name="Wolf P.G."/>
            <person name="Karol K.G."/>
            <person name="Mandoli D.F."/>
            <person name="Everett K.D.E."/>
            <person name="Kuehl J."/>
            <person name="Boore J.L."/>
        </authorList>
    </citation>
    <scope>NUCLEOTIDE SEQUENCE [LARGE SCALE GENOMIC DNA]</scope>
</reference>
<evidence type="ECO:0000255" key="1">
    <source>
        <dbReference type="HAMAP-Rule" id="MF_01495"/>
    </source>
</evidence>
<sequence length="508" mass="56258">MGLPWYRVHTVVLNDPGRLLSVHLMHTALVSGWAGSMALYELAVFDPSDPVLDPMWRQGMFVIPFMTRIGITKSWGGWSITGDTVNDAGIWSYEGVAASHIVLSGLLFLAAIWHWVYWDLDLFRDERTGKPSLDLPKIFGIHLFLSGVLCFGFGAFHITGLFGPGIWVSDPYGLTGKVQPVDPAWGAEGFDPFVPGGIASHHIAAGILGILAGLFHLSVRPPQRLYKALRMGNVETVLSSSIAAVFFAAFVVAGTMWYGSATTPIELFGPTRYQWDQGYFQQEIDRRIRASKAENLSLSEAWSKIPEKLAFYDYIGNNPAKGGLFRAGAMDNGDGIAVGWLGHATFKDKEGHELFVRRMPTFFETFPVVLVDEEGVVRADVPFRRAESKYSVEQVGVTVEFYGGELDGVSFSDPATVKKYARRAQLGEIFEFDRATLKSDGVFRSSPRGWFTFGHATFALIFFFGHIWHGARTLFRDVFAGIDPDLDAQVEFGAFQKLGDPTTKRQAV</sequence>
<dbReference type="EMBL" id="DQ821119">
    <property type="protein sequence ID" value="ABG79626.1"/>
    <property type="molecule type" value="Genomic_DNA"/>
</dbReference>
<dbReference type="RefSeq" id="YP_001023727.1">
    <property type="nucleotide sequence ID" value="NC_008829.1"/>
</dbReference>
<dbReference type="SMR" id="A2T359"/>
<dbReference type="GeneID" id="4788146"/>
<dbReference type="GO" id="GO:0009535">
    <property type="term" value="C:chloroplast thylakoid membrane"/>
    <property type="evidence" value="ECO:0007669"/>
    <property type="project" value="UniProtKB-SubCell"/>
</dbReference>
<dbReference type="GO" id="GO:0009523">
    <property type="term" value="C:photosystem II"/>
    <property type="evidence" value="ECO:0007669"/>
    <property type="project" value="UniProtKB-KW"/>
</dbReference>
<dbReference type="GO" id="GO:0016168">
    <property type="term" value="F:chlorophyll binding"/>
    <property type="evidence" value="ECO:0007669"/>
    <property type="project" value="UniProtKB-UniRule"/>
</dbReference>
<dbReference type="GO" id="GO:0045156">
    <property type="term" value="F:electron transporter, transferring electrons within the cyclic electron transport pathway of photosynthesis activity"/>
    <property type="evidence" value="ECO:0007669"/>
    <property type="project" value="InterPro"/>
</dbReference>
<dbReference type="GO" id="GO:0009772">
    <property type="term" value="P:photosynthetic electron transport in photosystem II"/>
    <property type="evidence" value="ECO:0007669"/>
    <property type="project" value="InterPro"/>
</dbReference>
<dbReference type="FunFam" id="3.10.680.10:FF:000001">
    <property type="entry name" value="Photosystem II CP47 reaction center protein"/>
    <property type="match status" value="1"/>
</dbReference>
<dbReference type="Gene3D" id="3.10.680.10">
    <property type="entry name" value="Photosystem II CP47 reaction center protein"/>
    <property type="match status" value="1"/>
</dbReference>
<dbReference type="HAMAP" id="MF_01495">
    <property type="entry name" value="PSII_PsbB_CP47"/>
    <property type="match status" value="1"/>
</dbReference>
<dbReference type="InterPro" id="IPR000932">
    <property type="entry name" value="PS_antenna-like"/>
</dbReference>
<dbReference type="InterPro" id="IPR036001">
    <property type="entry name" value="PS_II_antenna-like_sf"/>
</dbReference>
<dbReference type="InterPro" id="IPR017486">
    <property type="entry name" value="PSII_PsbB"/>
</dbReference>
<dbReference type="NCBIfam" id="TIGR03039">
    <property type="entry name" value="PS_II_CP47"/>
    <property type="match status" value="1"/>
</dbReference>
<dbReference type="Pfam" id="PF00421">
    <property type="entry name" value="PSII"/>
    <property type="match status" value="1"/>
</dbReference>
<dbReference type="SUPFAM" id="SSF161077">
    <property type="entry name" value="Photosystem II antenna protein-like"/>
    <property type="match status" value="1"/>
</dbReference>
<comment type="function">
    <text evidence="1">One of the components of the core complex of photosystem II (PSII). It binds chlorophyll and helps catalyze the primary light-induced photochemical processes of PSII. PSII is a light-driven water:plastoquinone oxidoreductase, using light energy to abstract electrons from H(2)O, generating O(2) and a proton gradient subsequently used for ATP formation.</text>
</comment>
<comment type="cofactor">
    <text evidence="1">Binds multiple chlorophylls. PSII binds additional chlorophylls, carotenoids and specific lipids.</text>
</comment>
<comment type="subunit">
    <text evidence="1">PSII is composed of 1 copy each of membrane proteins PsbA, PsbB, PsbC, PsbD, PsbE, PsbF, PsbH, PsbI, PsbJ, PsbK, PsbL, PsbM, PsbT, PsbX, PsbY, PsbZ, Psb30/Ycf12, at least 3 peripheral proteins of the oxygen-evolving complex and a large number of cofactors. It forms dimeric complexes.</text>
</comment>
<comment type="subcellular location">
    <subcellularLocation>
        <location evidence="1">Plastid</location>
        <location evidence="1">Chloroplast thylakoid membrane</location>
        <topology evidence="1">Multi-pass membrane protein</topology>
    </subcellularLocation>
</comment>
<comment type="similarity">
    <text evidence="1">Belongs to the PsbB/PsbC family. PsbB subfamily.</text>
</comment>
<name>PSBB_ANGEV</name>
<geneLocation type="chloroplast"/>
<keyword id="KW-0148">Chlorophyll</keyword>
<keyword id="KW-0150">Chloroplast</keyword>
<keyword id="KW-0157">Chromophore</keyword>
<keyword id="KW-0472">Membrane</keyword>
<keyword id="KW-0602">Photosynthesis</keyword>
<keyword id="KW-0604">Photosystem II</keyword>
<keyword id="KW-0934">Plastid</keyword>
<keyword id="KW-0793">Thylakoid</keyword>
<keyword id="KW-0812">Transmembrane</keyword>
<keyword id="KW-1133">Transmembrane helix</keyword>
<proteinExistence type="inferred from homology"/>